<dbReference type="EC" id="3.5.1.2" evidence="1"/>
<dbReference type="EMBL" id="BA000004">
    <property type="protein sequence ID" value="BAB06436.1"/>
    <property type="molecule type" value="Genomic_DNA"/>
</dbReference>
<dbReference type="PIR" id="E83989">
    <property type="entry name" value="E83989"/>
</dbReference>
<dbReference type="RefSeq" id="WP_010898865.1">
    <property type="nucleotide sequence ID" value="NC_002570.2"/>
</dbReference>
<dbReference type="SMR" id="Q9K9D1"/>
<dbReference type="STRING" id="272558.gene:10728615"/>
<dbReference type="KEGG" id="bha:BH2717"/>
<dbReference type="eggNOG" id="COG2066">
    <property type="taxonomic scope" value="Bacteria"/>
</dbReference>
<dbReference type="HOGENOM" id="CLU_027932_1_0_9"/>
<dbReference type="OrthoDB" id="9788822at2"/>
<dbReference type="Proteomes" id="UP000001258">
    <property type="component" value="Chromosome"/>
</dbReference>
<dbReference type="GO" id="GO:0004359">
    <property type="term" value="F:glutaminase activity"/>
    <property type="evidence" value="ECO:0007669"/>
    <property type="project" value="UniProtKB-UniRule"/>
</dbReference>
<dbReference type="GO" id="GO:0006537">
    <property type="term" value="P:glutamate biosynthetic process"/>
    <property type="evidence" value="ECO:0007669"/>
    <property type="project" value="TreeGrafter"/>
</dbReference>
<dbReference type="GO" id="GO:0006543">
    <property type="term" value="P:glutamine catabolic process"/>
    <property type="evidence" value="ECO:0007669"/>
    <property type="project" value="TreeGrafter"/>
</dbReference>
<dbReference type="FunFam" id="3.40.710.10:FF:000005">
    <property type="entry name" value="Glutaminase"/>
    <property type="match status" value="1"/>
</dbReference>
<dbReference type="Gene3D" id="1.10.1500.10">
    <property type="match status" value="1"/>
</dbReference>
<dbReference type="Gene3D" id="3.40.710.10">
    <property type="entry name" value="DD-peptidase/beta-lactamase superfamily"/>
    <property type="match status" value="1"/>
</dbReference>
<dbReference type="HAMAP" id="MF_00313">
    <property type="entry name" value="Glutaminase"/>
    <property type="match status" value="1"/>
</dbReference>
<dbReference type="InterPro" id="IPR012338">
    <property type="entry name" value="Beta-lactam/transpept-like"/>
</dbReference>
<dbReference type="InterPro" id="IPR015868">
    <property type="entry name" value="Glutaminase"/>
</dbReference>
<dbReference type="NCBIfam" id="TIGR03814">
    <property type="entry name" value="Gln_ase"/>
    <property type="match status" value="1"/>
</dbReference>
<dbReference type="NCBIfam" id="NF009021">
    <property type="entry name" value="PRK12357.1"/>
    <property type="match status" value="1"/>
</dbReference>
<dbReference type="PANTHER" id="PTHR12544">
    <property type="entry name" value="GLUTAMINASE"/>
    <property type="match status" value="1"/>
</dbReference>
<dbReference type="PANTHER" id="PTHR12544:SF32">
    <property type="entry name" value="GLUTAMINASE 1"/>
    <property type="match status" value="1"/>
</dbReference>
<dbReference type="Pfam" id="PF04960">
    <property type="entry name" value="Glutaminase"/>
    <property type="match status" value="1"/>
</dbReference>
<dbReference type="SUPFAM" id="SSF56601">
    <property type="entry name" value="beta-lactamase/transpeptidase-like"/>
    <property type="match status" value="1"/>
</dbReference>
<comment type="catalytic activity">
    <reaction evidence="1">
        <text>L-glutamine + H2O = L-glutamate + NH4(+)</text>
        <dbReference type="Rhea" id="RHEA:15889"/>
        <dbReference type="ChEBI" id="CHEBI:15377"/>
        <dbReference type="ChEBI" id="CHEBI:28938"/>
        <dbReference type="ChEBI" id="CHEBI:29985"/>
        <dbReference type="ChEBI" id="CHEBI:58359"/>
        <dbReference type="EC" id="3.5.1.2"/>
    </reaction>
</comment>
<comment type="subunit">
    <text evidence="1">Homotetramer.</text>
</comment>
<comment type="similarity">
    <text evidence="1">Belongs to the glutaminase family.</text>
</comment>
<organism>
    <name type="scientific">Halalkalibacterium halodurans (strain ATCC BAA-125 / DSM 18197 / FERM 7344 / JCM 9153 / C-125)</name>
    <name type="common">Bacillus halodurans</name>
    <dbReference type="NCBI Taxonomy" id="272558"/>
    <lineage>
        <taxon>Bacteria</taxon>
        <taxon>Bacillati</taxon>
        <taxon>Bacillota</taxon>
        <taxon>Bacilli</taxon>
        <taxon>Bacillales</taxon>
        <taxon>Bacillaceae</taxon>
        <taxon>Halalkalibacterium (ex Joshi et al. 2022)</taxon>
    </lineage>
</organism>
<protein>
    <recommendedName>
        <fullName evidence="1">Glutaminase 2</fullName>
        <ecNumber evidence="1">3.5.1.2</ecNumber>
    </recommendedName>
</protein>
<reference key="1">
    <citation type="journal article" date="2000" name="Nucleic Acids Res.">
        <title>Complete genome sequence of the alkaliphilic bacterium Bacillus halodurans and genomic sequence comparison with Bacillus subtilis.</title>
        <authorList>
            <person name="Takami H."/>
            <person name="Nakasone K."/>
            <person name="Takaki Y."/>
            <person name="Maeno G."/>
            <person name="Sasaki R."/>
            <person name="Masui N."/>
            <person name="Fuji F."/>
            <person name="Hirama C."/>
            <person name="Nakamura Y."/>
            <person name="Ogasawara N."/>
            <person name="Kuhara S."/>
            <person name="Horikoshi K."/>
        </authorList>
    </citation>
    <scope>NUCLEOTIDE SEQUENCE [LARGE SCALE GENOMIC DNA]</scope>
    <source>
        <strain>ATCC BAA-125 / DSM 18197 / FERM 7344 / JCM 9153 / C-125</strain>
    </source>
</reference>
<evidence type="ECO:0000255" key="1">
    <source>
        <dbReference type="HAMAP-Rule" id="MF_00313"/>
    </source>
</evidence>
<feature type="chain" id="PRO_0000110593" description="Glutaminase 2">
    <location>
        <begin position="1"/>
        <end position="324"/>
    </location>
</feature>
<feature type="binding site" evidence="1">
    <location>
        <position position="75"/>
    </location>
    <ligand>
        <name>substrate</name>
    </ligand>
</feature>
<feature type="binding site" evidence="1">
    <location>
        <position position="127"/>
    </location>
    <ligand>
        <name>substrate</name>
    </ligand>
</feature>
<feature type="binding site" evidence="1">
    <location>
        <position position="171"/>
    </location>
    <ligand>
        <name>substrate</name>
    </ligand>
</feature>
<feature type="binding site" evidence="1">
    <location>
        <position position="178"/>
    </location>
    <ligand>
        <name>substrate</name>
    </ligand>
</feature>
<feature type="binding site" evidence="1">
    <location>
        <position position="202"/>
    </location>
    <ligand>
        <name>substrate</name>
    </ligand>
</feature>
<feature type="binding site" evidence="1">
    <location>
        <position position="254"/>
    </location>
    <ligand>
        <name>substrate</name>
    </ligand>
</feature>
<feature type="binding site" evidence="1">
    <location>
        <position position="272"/>
    </location>
    <ligand>
        <name>substrate</name>
    </ligand>
</feature>
<proteinExistence type="inferred from homology"/>
<accession>Q9K9D1</accession>
<name>GLSA2_HALH5</name>
<gene>
    <name evidence="1" type="primary">glsA2</name>
    <name type="ordered locus">BH2717</name>
</gene>
<sequence>MLQQKQSLLEHKPVLSKELEKLVNHYRTLSLNGQCAQYIPALREANQTYLGLYVVHSNGIEIKSGDWQVPFTLQSISKIINFIAACLDRGITYVLDRVDVEPTGDPFNSMVRLEMRKTGKPFNPMINAGAITVASLLSGKSPTEKLESVYSLVEKMLGRRASANEAVFHSEWQTAHRNRSLAYYLKDTGYLESEVDDALHVYFTLCAIEVATKDIAKIGLILANNGYDPLSHQQIFPKEVAKLTKALMLTCGMYNASGTFAAHIGIPAKSGVSGGIMAAVPARGRSDEAMGIGIYGPAIDDFGNSVAGVALLKHLSHMWDLSIF</sequence>
<keyword id="KW-0378">Hydrolase</keyword>
<keyword id="KW-1185">Reference proteome</keyword>